<proteinExistence type="inferred from homology"/>
<keyword id="KW-0249">Electron transport</keyword>
<keyword id="KW-0472">Membrane</keyword>
<keyword id="KW-0602">Photosynthesis</keyword>
<keyword id="KW-1185">Reference proteome</keyword>
<keyword id="KW-0793">Thylakoid</keyword>
<keyword id="KW-0812">Transmembrane</keyword>
<keyword id="KW-1133">Transmembrane helix</keyword>
<keyword id="KW-0813">Transport</keyword>
<comment type="function">
    <text evidence="1">Component of the cytochrome b6-f complex, which mediates electron transfer between photosystem II (PSII) and photosystem I (PSI), cyclic electron flow around PSI, and state transitions.</text>
</comment>
<comment type="subunit">
    <text evidence="1">The 4 large subunits of the cytochrome b6-f complex are cytochrome b6, subunit IV (17 kDa polypeptide, PetD), cytochrome f and the Rieske protein, while the 4 small subunits are PetG, PetL, PetM and PetN. The complex functions as a dimer.</text>
</comment>
<comment type="subcellular location">
    <subcellularLocation>
        <location evidence="1">Cellular thylakoid membrane</location>
        <topology evidence="1">Single-pass membrane protein</topology>
    </subcellularLocation>
</comment>
<comment type="similarity">
    <text evidence="1">Belongs to the PetM family.</text>
</comment>
<dbReference type="EMBL" id="AE017126">
    <property type="protein sequence ID" value="AAQ00294.1"/>
    <property type="molecule type" value="Genomic_DNA"/>
</dbReference>
<dbReference type="RefSeq" id="NP_875641.1">
    <property type="nucleotide sequence ID" value="NC_005042.1"/>
</dbReference>
<dbReference type="RefSeq" id="WP_011125401.1">
    <property type="nucleotide sequence ID" value="NC_005042.1"/>
</dbReference>
<dbReference type="SMR" id="Q7VB49"/>
<dbReference type="STRING" id="167539.Pro_1249"/>
<dbReference type="EnsemblBacteria" id="AAQ00294">
    <property type="protein sequence ID" value="AAQ00294"/>
    <property type="gene ID" value="Pro_1249"/>
</dbReference>
<dbReference type="KEGG" id="pma:Pro_1249"/>
<dbReference type="PATRIC" id="fig|167539.5.peg.1311"/>
<dbReference type="HOGENOM" id="CLU_216743_1_0_3"/>
<dbReference type="Proteomes" id="UP000001420">
    <property type="component" value="Chromosome"/>
</dbReference>
<dbReference type="GO" id="GO:0009512">
    <property type="term" value="C:cytochrome b6f complex"/>
    <property type="evidence" value="ECO:0007669"/>
    <property type="project" value="InterPro"/>
</dbReference>
<dbReference type="GO" id="GO:0031676">
    <property type="term" value="C:plasma membrane-derived thylakoid membrane"/>
    <property type="evidence" value="ECO:0007669"/>
    <property type="project" value="UniProtKB-SubCell"/>
</dbReference>
<dbReference type="GO" id="GO:0009055">
    <property type="term" value="F:electron transfer activity"/>
    <property type="evidence" value="ECO:0007669"/>
    <property type="project" value="UniProtKB-UniRule"/>
</dbReference>
<dbReference type="GO" id="GO:0015979">
    <property type="term" value="P:photosynthesis"/>
    <property type="evidence" value="ECO:0007669"/>
    <property type="project" value="UniProtKB-KW"/>
</dbReference>
<dbReference type="HAMAP" id="MF_00396">
    <property type="entry name" value="Cytb6_f_PetM"/>
    <property type="match status" value="1"/>
</dbReference>
<dbReference type="InterPro" id="IPR012595">
    <property type="entry name" value="PetM_cyt_b6/f_cplx_su7"/>
</dbReference>
<dbReference type="NCBIfam" id="NF008826">
    <property type="entry name" value="PRK11876.1-2"/>
    <property type="match status" value="1"/>
</dbReference>
<dbReference type="Pfam" id="PF08041">
    <property type="entry name" value="PetM"/>
    <property type="match status" value="1"/>
</dbReference>
<reference key="1">
    <citation type="journal article" date="2003" name="Proc. Natl. Acad. Sci. U.S.A.">
        <title>Genome sequence of the cyanobacterium Prochlorococcus marinus SS120, a nearly minimal oxyphototrophic genome.</title>
        <authorList>
            <person name="Dufresne A."/>
            <person name="Salanoubat M."/>
            <person name="Partensky F."/>
            <person name="Artiguenave F."/>
            <person name="Axmann I.M."/>
            <person name="Barbe V."/>
            <person name="Duprat S."/>
            <person name="Galperin M.Y."/>
            <person name="Koonin E.V."/>
            <person name="Le Gall F."/>
            <person name="Makarova K.S."/>
            <person name="Ostrowski M."/>
            <person name="Oztas S."/>
            <person name="Robert C."/>
            <person name="Rogozin I.B."/>
            <person name="Scanlan D.J."/>
            <person name="Tandeau de Marsac N."/>
            <person name="Weissenbach J."/>
            <person name="Wincker P."/>
            <person name="Wolf Y.I."/>
            <person name="Hess W.R."/>
        </authorList>
    </citation>
    <scope>NUCLEOTIDE SEQUENCE [LARGE SCALE GENOMIC DNA]</scope>
    <source>
        <strain>SARG / CCMP1375 / SS120</strain>
    </source>
</reference>
<name>PETM_PROMA</name>
<organism>
    <name type="scientific">Prochlorococcus marinus (strain SARG / CCMP1375 / SS120)</name>
    <dbReference type="NCBI Taxonomy" id="167539"/>
    <lineage>
        <taxon>Bacteria</taxon>
        <taxon>Bacillati</taxon>
        <taxon>Cyanobacteriota</taxon>
        <taxon>Cyanophyceae</taxon>
        <taxon>Synechococcales</taxon>
        <taxon>Prochlorococcaceae</taxon>
        <taxon>Prochlorococcus</taxon>
    </lineage>
</organism>
<accession>Q7VB49</accession>
<evidence type="ECO:0000255" key="1">
    <source>
        <dbReference type="HAMAP-Rule" id="MF_00396"/>
    </source>
</evidence>
<sequence>MASEIFGTAAIFWVLIPAGLLGGALLLKLQGE</sequence>
<gene>
    <name evidence="1" type="primary">petM</name>
    <name type="ordered locus">Pro_1249</name>
</gene>
<feature type="chain" id="PRO_0000233231" description="Cytochrome b6-f complex subunit 7">
    <location>
        <begin position="1"/>
        <end position="32"/>
    </location>
</feature>
<feature type="transmembrane region" description="Helical" evidence="1">
    <location>
        <begin position="5"/>
        <end position="25"/>
    </location>
</feature>
<protein>
    <recommendedName>
        <fullName evidence="1">Cytochrome b6-f complex subunit 7</fullName>
    </recommendedName>
    <alternativeName>
        <fullName evidence="1">Cytochrome b6-f complex subunit PetM</fullName>
    </alternativeName>
    <alternativeName>
        <fullName evidence="1">Cytochrome b6-f complex subunit VII</fullName>
    </alternativeName>
</protein>